<feature type="chain" id="PRO_0000345182" description="Probable ubiquitin-conjugating enzyme E2 16">
    <location>
        <begin position="1"/>
        <end position="161"/>
    </location>
</feature>
<feature type="domain" description="UBC core" evidence="2">
    <location>
        <begin position="15"/>
        <end position="161"/>
    </location>
</feature>
<feature type="active site" description="Glycyl thioester intermediate" evidence="2 3">
    <location>
        <position position="99"/>
    </location>
</feature>
<feature type="sequence conflict" description="In Ref. 1; AAC39325." evidence="4" ref="1">
    <original>T</original>
    <variation>V</variation>
    <location>
        <position position="11"/>
    </location>
</feature>
<feature type="sequence conflict" description="In Ref. 1; AAC39325." evidence="4" ref="1">
    <original>IFLH</original>
    <variation>SFSS</variation>
    <location>
        <begin position="81"/>
        <end position="84"/>
    </location>
</feature>
<feature type="sequence conflict" description="In Ref. 1; AAC39325." evidence="4" ref="1">
    <original>L</original>
    <variation>S</variation>
    <location>
        <position position="88"/>
    </location>
</feature>
<feature type="sequence conflict" description="In Ref. 1; AAC39325." evidence="4" ref="1">
    <original>E</original>
    <variation>A</variation>
    <location>
        <position position="129"/>
    </location>
</feature>
<feature type="sequence conflict" description="In Ref. 1; AAC39325." evidence="4" ref="1">
    <original>GRSP</original>
    <variation>EDSSA</variation>
    <location>
        <begin position="146"/>
        <end position="149"/>
    </location>
</feature>
<feature type="sequence conflict" description="In Ref. 1; AAC39325." evidence="4" ref="1">
    <original>D</original>
    <variation>N</variation>
    <location>
        <position position="159"/>
    </location>
</feature>
<protein>
    <recommendedName>
        <fullName>Probable ubiquitin-conjugating enzyme E2 16</fullName>
        <ecNumber>2.3.2.23</ecNumber>
    </recommendedName>
    <alternativeName>
        <fullName>E2 ubiquitin-conjugating enzyme 16</fullName>
    </alternativeName>
    <alternativeName>
        <fullName>Ubiquitin carrier protein 16</fullName>
    </alternativeName>
</protein>
<reference key="1">
    <citation type="online journal article" date="1997" name="Plant Gene Register">
        <title>A new family of ubiquitin-conjugating enzymes (E2S) AtUBC15/16/17/18 in Arabidopsis thaliana.</title>
        <authorList>
            <person name="Yan N."/>
            <person name="Doelling J."/>
            <person name="Vierstra R.D."/>
        </authorList>
        <locator>PGR97-174</locator>
    </citation>
    <scope>NUCLEOTIDE SEQUENCE [GENOMIC DNA]</scope>
    <source>
        <strain>cv. Columbia</strain>
    </source>
</reference>
<reference key="2">
    <citation type="journal article" date="2005" name="Plant Physiol.">
        <title>Genome analysis and functional characterization of the E2 and RING-type E3 ligase ubiquitination enzymes of Arabidopsis.</title>
        <authorList>
            <person name="Kraft E."/>
            <person name="Stone S.L."/>
            <person name="Ma L."/>
            <person name="Su N."/>
            <person name="Gao Y."/>
            <person name="Lau O.-S."/>
            <person name="Deng X.-W."/>
            <person name="Callis J."/>
        </authorList>
    </citation>
    <scope>NUCLEOTIDE SEQUENCE [MRNA]</scope>
    <scope>GENE FAMILY</scope>
    <scope>NOMENCLATURE</scope>
</reference>
<reference key="3">
    <citation type="journal article" date="2000" name="Nature">
        <title>Sequence and analysis of chromosome 1 of the plant Arabidopsis thaliana.</title>
        <authorList>
            <person name="Theologis A."/>
            <person name="Ecker J.R."/>
            <person name="Palm C.J."/>
            <person name="Federspiel N.A."/>
            <person name="Kaul S."/>
            <person name="White O."/>
            <person name="Alonso J."/>
            <person name="Altafi H."/>
            <person name="Araujo R."/>
            <person name="Bowman C.L."/>
            <person name="Brooks S.Y."/>
            <person name="Buehler E."/>
            <person name="Chan A."/>
            <person name="Chao Q."/>
            <person name="Chen H."/>
            <person name="Cheuk R.F."/>
            <person name="Chin C.W."/>
            <person name="Chung M.K."/>
            <person name="Conn L."/>
            <person name="Conway A.B."/>
            <person name="Conway A.R."/>
            <person name="Creasy T.H."/>
            <person name="Dewar K."/>
            <person name="Dunn P."/>
            <person name="Etgu P."/>
            <person name="Feldblyum T.V."/>
            <person name="Feng J.-D."/>
            <person name="Fong B."/>
            <person name="Fujii C.Y."/>
            <person name="Gill J.E."/>
            <person name="Goldsmith A.D."/>
            <person name="Haas B."/>
            <person name="Hansen N.F."/>
            <person name="Hughes B."/>
            <person name="Huizar L."/>
            <person name="Hunter J.L."/>
            <person name="Jenkins J."/>
            <person name="Johnson-Hopson C."/>
            <person name="Khan S."/>
            <person name="Khaykin E."/>
            <person name="Kim C.J."/>
            <person name="Koo H.L."/>
            <person name="Kremenetskaia I."/>
            <person name="Kurtz D.B."/>
            <person name="Kwan A."/>
            <person name="Lam B."/>
            <person name="Langin-Hooper S."/>
            <person name="Lee A."/>
            <person name="Lee J.M."/>
            <person name="Lenz C.A."/>
            <person name="Li J.H."/>
            <person name="Li Y.-P."/>
            <person name="Lin X."/>
            <person name="Liu S.X."/>
            <person name="Liu Z.A."/>
            <person name="Luros J.S."/>
            <person name="Maiti R."/>
            <person name="Marziali A."/>
            <person name="Militscher J."/>
            <person name="Miranda M."/>
            <person name="Nguyen M."/>
            <person name="Nierman W.C."/>
            <person name="Osborne B.I."/>
            <person name="Pai G."/>
            <person name="Peterson J."/>
            <person name="Pham P.K."/>
            <person name="Rizzo M."/>
            <person name="Rooney T."/>
            <person name="Rowley D."/>
            <person name="Sakano H."/>
            <person name="Salzberg S.L."/>
            <person name="Schwartz J.R."/>
            <person name="Shinn P."/>
            <person name="Southwick A.M."/>
            <person name="Sun H."/>
            <person name="Tallon L.J."/>
            <person name="Tambunga G."/>
            <person name="Toriumi M.J."/>
            <person name="Town C.D."/>
            <person name="Utterback T."/>
            <person name="Van Aken S."/>
            <person name="Vaysberg M."/>
            <person name="Vysotskaia V.S."/>
            <person name="Walker M."/>
            <person name="Wu D."/>
            <person name="Yu G."/>
            <person name="Fraser C.M."/>
            <person name="Venter J.C."/>
            <person name="Davis R.W."/>
        </authorList>
    </citation>
    <scope>NUCLEOTIDE SEQUENCE [LARGE SCALE GENOMIC DNA]</scope>
    <source>
        <strain>cv. Columbia</strain>
    </source>
</reference>
<reference key="4">
    <citation type="journal article" date="2017" name="Plant J.">
        <title>Araport11: a complete reannotation of the Arabidopsis thaliana reference genome.</title>
        <authorList>
            <person name="Cheng C.Y."/>
            <person name="Krishnakumar V."/>
            <person name="Chan A.P."/>
            <person name="Thibaud-Nissen F."/>
            <person name="Schobel S."/>
            <person name="Town C.D."/>
        </authorList>
    </citation>
    <scope>GENOME REANNOTATION</scope>
    <source>
        <strain>cv. Columbia</strain>
    </source>
</reference>
<reference key="5">
    <citation type="journal article" date="2003" name="Science">
        <title>Empirical analysis of transcriptional activity in the Arabidopsis genome.</title>
        <authorList>
            <person name="Yamada K."/>
            <person name="Lim J."/>
            <person name="Dale J.M."/>
            <person name="Chen H."/>
            <person name="Shinn P."/>
            <person name="Palm C.J."/>
            <person name="Southwick A.M."/>
            <person name="Wu H.C."/>
            <person name="Kim C.J."/>
            <person name="Nguyen M."/>
            <person name="Pham P.K."/>
            <person name="Cheuk R.F."/>
            <person name="Karlin-Newmann G."/>
            <person name="Liu S.X."/>
            <person name="Lam B."/>
            <person name="Sakano H."/>
            <person name="Wu T."/>
            <person name="Yu G."/>
            <person name="Miranda M."/>
            <person name="Quach H.L."/>
            <person name="Tripp M."/>
            <person name="Chang C.H."/>
            <person name="Lee J.M."/>
            <person name="Toriumi M.J."/>
            <person name="Chan M.M."/>
            <person name="Tang C.C."/>
            <person name="Onodera C.S."/>
            <person name="Deng J.M."/>
            <person name="Akiyama K."/>
            <person name="Ansari Y."/>
            <person name="Arakawa T."/>
            <person name="Banh J."/>
            <person name="Banno F."/>
            <person name="Bowser L."/>
            <person name="Brooks S.Y."/>
            <person name="Carninci P."/>
            <person name="Chao Q."/>
            <person name="Choy N."/>
            <person name="Enju A."/>
            <person name="Goldsmith A.D."/>
            <person name="Gurjal M."/>
            <person name="Hansen N.F."/>
            <person name="Hayashizaki Y."/>
            <person name="Johnson-Hopson C."/>
            <person name="Hsuan V.W."/>
            <person name="Iida K."/>
            <person name="Karnes M."/>
            <person name="Khan S."/>
            <person name="Koesema E."/>
            <person name="Ishida J."/>
            <person name="Jiang P.X."/>
            <person name="Jones T."/>
            <person name="Kawai J."/>
            <person name="Kamiya A."/>
            <person name="Meyers C."/>
            <person name="Nakajima M."/>
            <person name="Narusaka M."/>
            <person name="Seki M."/>
            <person name="Sakurai T."/>
            <person name="Satou M."/>
            <person name="Tamse R."/>
            <person name="Vaysberg M."/>
            <person name="Wallender E.K."/>
            <person name="Wong C."/>
            <person name="Yamamura Y."/>
            <person name="Yuan S."/>
            <person name="Shinozaki K."/>
            <person name="Davis R.W."/>
            <person name="Theologis A."/>
            <person name="Ecker J.R."/>
        </authorList>
    </citation>
    <scope>NUCLEOTIDE SEQUENCE [LARGE SCALE MRNA]</scope>
    <source>
        <strain>cv. Columbia</strain>
    </source>
</reference>
<sequence>MSSSGAPSRKTLSKIATNRLQKELVEWQMNPPTGFKHKVTDNLQRWIIEVIGAPGTLYANDTYQLQVDFPEHYPMESPQVIFLHPAPLHPHIYSNGHICLDILYDSWSPAMTVSSICISILSMLSSSTEKQRPTDNDRYVKNCKNGRSPKETRWWFHDDKV</sequence>
<dbReference type="EC" id="2.3.2.23"/>
<dbReference type="EMBL" id="AF028339">
    <property type="protein sequence ID" value="AAC39325.1"/>
    <property type="molecule type" value="Genomic_DNA"/>
</dbReference>
<dbReference type="EMBL" id="DQ027030">
    <property type="protein sequence ID" value="AAY44856.1"/>
    <property type="molecule type" value="mRNA"/>
</dbReference>
<dbReference type="EMBL" id="AC023754">
    <property type="protein sequence ID" value="AAG13066.1"/>
    <property type="molecule type" value="Genomic_DNA"/>
</dbReference>
<dbReference type="EMBL" id="CP002684">
    <property type="protein sequence ID" value="AEE35720.1"/>
    <property type="molecule type" value="Genomic_DNA"/>
</dbReference>
<dbReference type="EMBL" id="AY065459">
    <property type="protein sequence ID" value="AAL38900.1"/>
    <property type="molecule type" value="mRNA"/>
</dbReference>
<dbReference type="EMBL" id="AY091226">
    <property type="protein sequence ID" value="AAM14165.1"/>
    <property type="molecule type" value="mRNA"/>
</dbReference>
<dbReference type="PIR" id="A96785">
    <property type="entry name" value="A96785"/>
</dbReference>
<dbReference type="RefSeq" id="NP_565110.1">
    <property type="nucleotide sequence ID" value="NM_106198.5"/>
</dbReference>
<dbReference type="SMR" id="Q9FWT2"/>
<dbReference type="BioGRID" id="29099">
    <property type="interactions" value="3"/>
</dbReference>
<dbReference type="FunCoup" id="Q9FWT2">
    <property type="interactions" value="3859"/>
</dbReference>
<dbReference type="IntAct" id="Q9FWT2">
    <property type="interactions" value="3"/>
</dbReference>
<dbReference type="STRING" id="3702.Q9FWT2"/>
<dbReference type="PaxDb" id="3702-AT1G75440.1"/>
<dbReference type="ProteomicsDB" id="243211"/>
<dbReference type="EnsemblPlants" id="AT1G75440.1">
    <property type="protein sequence ID" value="AT1G75440.1"/>
    <property type="gene ID" value="AT1G75440"/>
</dbReference>
<dbReference type="GeneID" id="843880"/>
<dbReference type="Gramene" id="AT1G75440.1">
    <property type="protein sequence ID" value="AT1G75440.1"/>
    <property type="gene ID" value="AT1G75440"/>
</dbReference>
<dbReference type="KEGG" id="ath:AT1G75440"/>
<dbReference type="Araport" id="AT1G75440"/>
<dbReference type="TAIR" id="AT1G75440">
    <property type="gene designation" value="UBC16"/>
</dbReference>
<dbReference type="eggNOG" id="KOG0427">
    <property type="taxonomic scope" value="Eukaryota"/>
</dbReference>
<dbReference type="HOGENOM" id="CLU_030988_15_1_1"/>
<dbReference type="InParanoid" id="Q9FWT2"/>
<dbReference type="OMA" id="EWQRNPP"/>
<dbReference type="OrthoDB" id="406833at2759"/>
<dbReference type="PhylomeDB" id="Q9FWT2"/>
<dbReference type="UniPathway" id="UPA00143"/>
<dbReference type="PRO" id="PR:Q9FWT2"/>
<dbReference type="Proteomes" id="UP000006548">
    <property type="component" value="Chromosome 1"/>
</dbReference>
<dbReference type="ExpressionAtlas" id="Q9FWT2">
    <property type="expression patterns" value="baseline and differential"/>
</dbReference>
<dbReference type="GO" id="GO:0005524">
    <property type="term" value="F:ATP binding"/>
    <property type="evidence" value="ECO:0007669"/>
    <property type="project" value="UniProtKB-KW"/>
</dbReference>
<dbReference type="GO" id="GO:0061631">
    <property type="term" value="F:ubiquitin conjugating enzyme activity"/>
    <property type="evidence" value="ECO:0007669"/>
    <property type="project" value="UniProtKB-EC"/>
</dbReference>
<dbReference type="GO" id="GO:0016567">
    <property type="term" value="P:protein ubiquitination"/>
    <property type="evidence" value="ECO:0007669"/>
    <property type="project" value="UniProtKB-UniPathway"/>
</dbReference>
<dbReference type="CDD" id="cd23808">
    <property type="entry name" value="UBCc_UBE2W"/>
    <property type="match status" value="1"/>
</dbReference>
<dbReference type="FunFam" id="3.10.110.10:FF:000032">
    <property type="entry name" value="probable ubiquitin-conjugating enzyme E2 16"/>
    <property type="match status" value="1"/>
</dbReference>
<dbReference type="Gene3D" id="3.10.110.10">
    <property type="entry name" value="Ubiquitin Conjugating Enzyme"/>
    <property type="match status" value="1"/>
</dbReference>
<dbReference type="InterPro" id="IPR050113">
    <property type="entry name" value="Ub_conjugating_enzyme"/>
</dbReference>
<dbReference type="InterPro" id="IPR000608">
    <property type="entry name" value="UBQ-conjugat_E2_core"/>
</dbReference>
<dbReference type="InterPro" id="IPR023313">
    <property type="entry name" value="UBQ-conjugating_AS"/>
</dbReference>
<dbReference type="InterPro" id="IPR016135">
    <property type="entry name" value="UBQ-conjugating_enzyme/RWD"/>
</dbReference>
<dbReference type="PANTHER" id="PTHR24067">
    <property type="entry name" value="UBIQUITIN-CONJUGATING ENZYME E2"/>
    <property type="match status" value="1"/>
</dbReference>
<dbReference type="Pfam" id="PF00179">
    <property type="entry name" value="UQ_con"/>
    <property type="match status" value="1"/>
</dbReference>
<dbReference type="SMART" id="SM00212">
    <property type="entry name" value="UBCc"/>
    <property type="match status" value="1"/>
</dbReference>
<dbReference type="SUPFAM" id="SSF54495">
    <property type="entry name" value="UBC-like"/>
    <property type="match status" value="1"/>
</dbReference>
<dbReference type="PROSITE" id="PS00183">
    <property type="entry name" value="UBC_1"/>
    <property type="match status" value="1"/>
</dbReference>
<dbReference type="PROSITE" id="PS50127">
    <property type="entry name" value="UBC_2"/>
    <property type="match status" value="1"/>
</dbReference>
<gene>
    <name type="primary">UBC16</name>
    <name type="ordered locus">At1g75440</name>
    <name type="ORF">F1B16.3</name>
</gene>
<keyword id="KW-0067">ATP-binding</keyword>
<keyword id="KW-0547">Nucleotide-binding</keyword>
<keyword id="KW-1185">Reference proteome</keyword>
<keyword id="KW-0808">Transferase</keyword>
<keyword id="KW-0833">Ubl conjugation pathway</keyword>
<name>UBC16_ARATH</name>
<evidence type="ECO:0000250" key="1">
    <source>
        <dbReference type="UniProtKB" id="P42743"/>
    </source>
</evidence>
<evidence type="ECO:0000255" key="2">
    <source>
        <dbReference type="PROSITE-ProRule" id="PRU00388"/>
    </source>
</evidence>
<evidence type="ECO:0000255" key="3">
    <source>
        <dbReference type="PROSITE-ProRule" id="PRU10133"/>
    </source>
</evidence>
<evidence type="ECO:0000305" key="4"/>
<organism>
    <name type="scientific">Arabidopsis thaliana</name>
    <name type="common">Mouse-ear cress</name>
    <dbReference type="NCBI Taxonomy" id="3702"/>
    <lineage>
        <taxon>Eukaryota</taxon>
        <taxon>Viridiplantae</taxon>
        <taxon>Streptophyta</taxon>
        <taxon>Embryophyta</taxon>
        <taxon>Tracheophyta</taxon>
        <taxon>Spermatophyta</taxon>
        <taxon>Magnoliopsida</taxon>
        <taxon>eudicotyledons</taxon>
        <taxon>Gunneridae</taxon>
        <taxon>Pentapetalae</taxon>
        <taxon>rosids</taxon>
        <taxon>malvids</taxon>
        <taxon>Brassicales</taxon>
        <taxon>Brassicaceae</taxon>
        <taxon>Camelineae</taxon>
        <taxon>Arabidopsis</taxon>
    </lineage>
</organism>
<accession>Q9FWT2</accession>
<accession>O48953</accession>
<proteinExistence type="evidence at transcript level"/>
<comment type="function">
    <text evidence="1">Accepts the ubiquitin from the E1 complex and catalyzes its covalent attachment to other proteins.</text>
</comment>
<comment type="catalytic activity">
    <reaction evidence="2 3">
        <text>S-ubiquitinyl-[E1 ubiquitin-activating enzyme]-L-cysteine + [E2 ubiquitin-conjugating enzyme]-L-cysteine = [E1 ubiquitin-activating enzyme]-L-cysteine + S-ubiquitinyl-[E2 ubiquitin-conjugating enzyme]-L-cysteine.</text>
        <dbReference type="EC" id="2.3.2.23"/>
    </reaction>
</comment>
<comment type="pathway">
    <text evidence="2">Protein modification; protein ubiquitination.</text>
</comment>
<comment type="similarity">
    <text evidence="2">Belongs to the ubiquitin-conjugating enzyme family.</text>
</comment>